<feature type="chain" id="PRO_0000282734" description="Ribosomal RNA large subunit methyltransferase E">
    <location>
        <begin position="1"/>
        <end position="220"/>
    </location>
</feature>
<feature type="region of interest" description="Disordered" evidence="2">
    <location>
        <begin position="197"/>
        <end position="220"/>
    </location>
</feature>
<feature type="active site" description="Proton acceptor" evidence="1">
    <location>
        <position position="173"/>
    </location>
</feature>
<feature type="binding site" evidence="1">
    <location>
        <position position="60"/>
    </location>
    <ligand>
        <name>S-adenosyl-L-methionine</name>
        <dbReference type="ChEBI" id="CHEBI:59789"/>
    </ligand>
</feature>
<feature type="binding site" evidence="1">
    <location>
        <position position="62"/>
    </location>
    <ligand>
        <name>S-adenosyl-L-methionine</name>
        <dbReference type="ChEBI" id="CHEBI:59789"/>
    </ligand>
</feature>
<feature type="binding site" evidence="1">
    <location>
        <position position="92"/>
    </location>
    <ligand>
        <name>S-adenosyl-L-methionine</name>
        <dbReference type="ChEBI" id="CHEBI:59789"/>
    </ligand>
</feature>
<feature type="binding site" evidence="1">
    <location>
        <position position="108"/>
    </location>
    <ligand>
        <name>S-adenosyl-L-methionine</name>
        <dbReference type="ChEBI" id="CHEBI:59789"/>
    </ligand>
</feature>
<feature type="binding site" evidence="1">
    <location>
        <position position="133"/>
    </location>
    <ligand>
        <name>S-adenosyl-L-methionine</name>
        <dbReference type="ChEBI" id="CHEBI:59789"/>
    </ligand>
</feature>
<accession>Q0BGJ2</accession>
<name>RLME_BURCM</name>
<proteinExistence type="inferred from homology"/>
<keyword id="KW-0963">Cytoplasm</keyword>
<keyword id="KW-0489">Methyltransferase</keyword>
<keyword id="KW-0698">rRNA processing</keyword>
<keyword id="KW-0949">S-adenosyl-L-methionine</keyword>
<keyword id="KW-0808">Transferase</keyword>
<sequence>MAKNRFNQNWLHDHINDPYVKMAQREGYRARAAYKLKEIDEQDKLIRPGQVIVDLGATPGSWSQYARNKLAQGKKRDTQREGGIDGTIIALDLLPMEPIADVHFIQGDFREDDVLRQLEDVLEGRAVDLVISDMAPNLSGVASADAARIEHLCDLALEFAQNHLKPDGALLVKCFHGSGYSQIVEKFKQQFKVVAPRKPKASRDKSSETFILGRQLKQPR</sequence>
<dbReference type="EC" id="2.1.1.166" evidence="1"/>
<dbReference type="EMBL" id="CP000440">
    <property type="protein sequence ID" value="ABI86731.1"/>
    <property type="molecule type" value="Genomic_DNA"/>
</dbReference>
<dbReference type="RefSeq" id="WP_011656499.1">
    <property type="nucleotide sequence ID" value="NC_008390.1"/>
</dbReference>
<dbReference type="SMR" id="Q0BGJ2"/>
<dbReference type="GeneID" id="93083422"/>
<dbReference type="KEGG" id="bam:Bamb_1173"/>
<dbReference type="PATRIC" id="fig|339670.21.peg.389"/>
<dbReference type="eggNOG" id="COG0293">
    <property type="taxonomic scope" value="Bacteria"/>
</dbReference>
<dbReference type="Proteomes" id="UP000000662">
    <property type="component" value="Chromosome 1"/>
</dbReference>
<dbReference type="GO" id="GO:0005737">
    <property type="term" value="C:cytoplasm"/>
    <property type="evidence" value="ECO:0007669"/>
    <property type="project" value="UniProtKB-SubCell"/>
</dbReference>
<dbReference type="GO" id="GO:0008650">
    <property type="term" value="F:rRNA (uridine-2'-O-)-methyltransferase activity"/>
    <property type="evidence" value="ECO:0007669"/>
    <property type="project" value="UniProtKB-UniRule"/>
</dbReference>
<dbReference type="FunFam" id="3.40.50.150:FF:000005">
    <property type="entry name" value="Ribosomal RNA large subunit methyltransferase E"/>
    <property type="match status" value="1"/>
</dbReference>
<dbReference type="Gene3D" id="3.40.50.150">
    <property type="entry name" value="Vaccinia Virus protein VP39"/>
    <property type="match status" value="1"/>
</dbReference>
<dbReference type="HAMAP" id="MF_01547">
    <property type="entry name" value="RNA_methyltr_E"/>
    <property type="match status" value="1"/>
</dbReference>
<dbReference type="InterPro" id="IPR050082">
    <property type="entry name" value="RNA_methyltr_RlmE"/>
</dbReference>
<dbReference type="InterPro" id="IPR002877">
    <property type="entry name" value="RNA_MeTrfase_FtsJ_dom"/>
</dbReference>
<dbReference type="InterPro" id="IPR015507">
    <property type="entry name" value="rRNA-MeTfrase_E"/>
</dbReference>
<dbReference type="InterPro" id="IPR029063">
    <property type="entry name" value="SAM-dependent_MTases_sf"/>
</dbReference>
<dbReference type="PANTHER" id="PTHR10920">
    <property type="entry name" value="RIBOSOMAL RNA METHYLTRANSFERASE"/>
    <property type="match status" value="1"/>
</dbReference>
<dbReference type="PANTHER" id="PTHR10920:SF18">
    <property type="entry name" value="RRNA METHYLTRANSFERASE 2, MITOCHONDRIAL"/>
    <property type="match status" value="1"/>
</dbReference>
<dbReference type="Pfam" id="PF01728">
    <property type="entry name" value="FtsJ"/>
    <property type="match status" value="1"/>
</dbReference>
<dbReference type="PIRSF" id="PIRSF005461">
    <property type="entry name" value="23S_rRNA_mtase"/>
    <property type="match status" value="1"/>
</dbReference>
<dbReference type="SUPFAM" id="SSF53335">
    <property type="entry name" value="S-adenosyl-L-methionine-dependent methyltransferases"/>
    <property type="match status" value="1"/>
</dbReference>
<comment type="function">
    <text evidence="1">Specifically methylates the uridine in position 2552 of 23S rRNA at the 2'-O position of the ribose in the fully assembled 50S ribosomal subunit.</text>
</comment>
<comment type="catalytic activity">
    <reaction evidence="1">
        <text>uridine(2552) in 23S rRNA + S-adenosyl-L-methionine = 2'-O-methyluridine(2552) in 23S rRNA + S-adenosyl-L-homocysteine + H(+)</text>
        <dbReference type="Rhea" id="RHEA:42720"/>
        <dbReference type="Rhea" id="RHEA-COMP:10202"/>
        <dbReference type="Rhea" id="RHEA-COMP:10203"/>
        <dbReference type="ChEBI" id="CHEBI:15378"/>
        <dbReference type="ChEBI" id="CHEBI:57856"/>
        <dbReference type="ChEBI" id="CHEBI:59789"/>
        <dbReference type="ChEBI" id="CHEBI:65315"/>
        <dbReference type="ChEBI" id="CHEBI:74478"/>
        <dbReference type="EC" id="2.1.1.166"/>
    </reaction>
</comment>
<comment type="subcellular location">
    <subcellularLocation>
        <location evidence="1">Cytoplasm</location>
    </subcellularLocation>
</comment>
<comment type="similarity">
    <text evidence="1">Belongs to the class I-like SAM-binding methyltransferase superfamily. RNA methyltransferase RlmE family.</text>
</comment>
<organism>
    <name type="scientific">Burkholderia ambifaria (strain ATCC BAA-244 / DSM 16087 / CCUG 44356 / LMG 19182 / AMMD)</name>
    <name type="common">Burkholderia cepacia (strain AMMD)</name>
    <dbReference type="NCBI Taxonomy" id="339670"/>
    <lineage>
        <taxon>Bacteria</taxon>
        <taxon>Pseudomonadati</taxon>
        <taxon>Pseudomonadota</taxon>
        <taxon>Betaproteobacteria</taxon>
        <taxon>Burkholderiales</taxon>
        <taxon>Burkholderiaceae</taxon>
        <taxon>Burkholderia</taxon>
        <taxon>Burkholderia cepacia complex</taxon>
    </lineage>
</organism>
<protein>
    <recommendedName>
        <fullName evidence="1">Ribosomal RNA large subunit methyltransferase E</fullName>
        <ecNumber evidence="1">2.1.1.166</ecNumber>
    </recommendedName>
    <alternativeName>
        <fullName evidence="1">23S rRNA Um2552 methyltransferase</fullName>
    </alternativeName>
    <alternativeName>
        <fullName evidence="1">rRNA (uridine-2'-O-)-methyltransferase</fullName>
    </alternativeName>
</protein>
<reference key="1">
    <citation type="submission" date="2006-08" db="EMBL/GenBank/DDBJ databases">
        <title>Complete sequence of chromosome 1 of Burkholderia cepacia AMMD.</title>
        <authorList>
            <person name="Copeland A."/>
            <person name="Lucas S."/>
            <person name="Lapidus A."/>
            <person name="Barry K."/>
            <person name="Detter J.C."/>
            <person name="Glavina del Rio T."/>
            <person name="Hammon N."/>
            <person name="Israni S."/>
            <person name="Pitluck S."/>
            <person name="Bruce D."/>
            <person name="Chain P."/>
            <person name="Malfatti S."/>
            <person name="Shin M."/>
            <person name="Vergez L."/>
            <person name="Schmutz J."/>
            <person name="Larimer F."/>
            <person name="Land M."/>
            <person name="Hauser L."/>
            <person name="Kyrpides N."/>
            <person name="Kim E."/>
            <person name="Parke J."/>
            <person name="Coenye T."/>
            <person name="Konstantinidis K."/>
            <person name="Ramette A."/>
            <person name="Tiedje J."/>
            <person name="Richardson P."/>
        </authorList>
    </citation>
    <scope>NUCLEOTIDE SEQUENCE [LARGE SCALE GENOMIC DNA]</scope>
    <source>
        <strain>ATCC BAA-244 / DSM 16087 / CCUG 44356 / LMG 19182 / AMMD</strain>
    </source>
</reference>
<evidence type="ECO:0000255" key="1">
    <source>
        <dbReference type="HAMAP-Rule" id="MF_01547"/>
    </source>
</evidence>
<evidence type="ECO:0000256" key="2">
    <source>
        <dbReference type="SAM" id="MobiDB-lite"/>
    </source>
</evidence>
<gene>
    <name evidence="1" type="primary">rlmE</name>
    <name evidence="1" type="synonym">ftsJ</name>
    <name evidence="1" type="synonym">rrmJ</name>
    <name type="ordered locus">Bamb_1173</name>
</gene>